<organism>
    <name type="scientific">Schizosaccharomyces pombe (strain 972 / ATCC 24843)</name>
    <name type="common">Fission yeast</name>
    <dbReference type="NCBI Taxonomy" id="284812"/>
    <lineage>
        <taxon>Eukaryota</taxon>
        <taxon>Fungi</taxon>
        <taxon>Dikarya</taxon>
        <taxon>Ascomycota</taxon>
        <taxon>Taphrinomycotina</taxon>
        <taxon>Schizosaccharomycetes</taxon>
        <taxon>Schizosaccharomycetales</taxon>
        <taxon>Schizosaccharomycetaceae</taxon>
        <taxon>Schizosaccharomyces</taxon>
    </lineage>
</organism>
<keyword id="KW-0067">ATP-binding</keyword>
<keyword id="KW-0143">Chaperone</keyword>
<keyword id="KW-0378">Hydrolase</keyword>
<keyword id="KW-0472">Membrane</keyword>
<keyword id="KW-0496">Mitochondrion</keyword>
<keyword id="KW-0999">Mitochondrion inner membrane</keyword>
<keyword id="KW-0547">Nucleotide-binding</keyword>
<keyword id="KW-1185">Reference proteome</keyword>
<keyword id="KW-0812">Transmembrane</keyword>
<keyword id="KW-1133">Transmembrane helix</keyword>
<dbReference type="EC" id="3.6.1.-" evidence="1"/>
<dbReference type="EMBL" id="CU329670">
    <property type="protein sequence ID" value="CAB90134.1"/>
    <property type="molecule type" value="Genomic_DNA"/>
</dbReference>
<dbReference type="EMBL" id="D89136">
    <property type="protein sequence ID" value="BAA13798.1"/>
    <property type="molecule type" value="mRNA"/>
</dbReference>
<dbReference type="PIR" id="T42406">
    <property type="entry name" value="T42406"/>
</dbReference>
<dbReference type="SMR" id="Q9P6Q3"/>
<dbReference type="BioGRID" id="280077">
    <property type="interactions" value="9"/>
</dbReference>
<dbReference type="FunCoup" id="Q9P6Q3">
    <property type="interactions" value="172"/>
</dbReference>
<dbReference type="STRING" id="284812.Q9P6Q3"/>
<dbReference type="PaxDb" id="4896-SPAC644.07.1"/>
<dbReference type="EnsemblFungi" id="SPAC644.07.1">
    <property type="protein sequence ID" value="SPAC644.07.1:pep"/>
    <property type="gene ID" value="SPAC644.07"/>
</dbReference>
<dbReference type="KEGG" id="spo:2543663"/>
<dbReference type="PomBase" id="SPAC644.07"/>
<dbReference type="VEuPathDB" id="FungiDB:SPAC644.07"/>
<dbReference type="eggNOG" id="KOG0743">
    <property type="taxonomic scope" value="Eukaryota"/>
</dbReference>
<dbReference type="HOGENOM" id="CLU_010189_6_2_1"/>
<dbReference type="InParanoid" id="Q9P6Q3"/>
<dbReference type="OMA" id="WMTLYQR"/>
<dbReference type="PhylomeDB" id="Q9P6Q3"/>
<dbReference type="PRO" id="PR:Q9P6Q3"/>
<dbReference type="Proteomes" id="UP000002485">
    <property type="component" value="Chromosome I"/>
</dbReference>
<dbReference type="GO" id="GO:0005743">
    <property type="term" value="C:mitochondrial inner membrane"/>
    <property type="evidence" value="ECO:0000318"/>
    <property type="project" value="GO_Central"/>
</dbReference>
<dbReference type="GO" id="GO:0005739">
    <property type="term" value="C:mitochondrion"/>
    <property type="evidence" value="ECO:0007005"/>
    <property type="project" value="PomBase"/>
</dbReference>
<dbReference type="GO" id="GO:0005524">
    <property type="term" value="F:ATP binding"/>
    <property type="evidence" value="ECO:0007669"/>
    <property type="project" value="UniProtKB-KW"/>
</dbReference>
<dbReference type="GO" id="GO:0016887">
    <property type="term" value="F:ATP hydrolysis activity"/>
    <property type="evidence" value="ECO:0000250"/>
    <property type="project" value="PomBase"/>
</dbReference>
<dbReference type="GO" id="GO:0140597">
    <property type="term" value="F:protein carrier chaperone"/>
    <property type="evidence" value="ECO:0000303"/>
    <property type="project" value="PomBase"/>
</dbReference>
<dbReference type="GO" id="GO:0034551">
    <property type="term" value="P:mitochondrial respiratory chain complex III assembly"/>
    <property type="evidence" value="ECO:0000318"/>
    <property type="project" value="GO_Central"/>
</dbReference>
<dbReference type="GO" id="GO:0032979">
    <property type="term" value="P:protein insertion into mitochondrial inner membrane from matrix"/>
    <property type="evidence" value="ECO:0000318"/>
    <property type="project" value="GO_Central"/>
</dbReference>
<dbReference type="CDD" id="cd19510">
    <property type="entry name" value="RecA-like_BCS1"/>
    <property type="match status" value="1"/>
</dbReference>
<dbReference type="FunFam" id="3.40.50.300:FF:000768">
    <property type="entry name" value="Probable mitochondrial chaperone bcs1"/>
    <property type="match status" value="1"/>
</dbReference>
<dbReference type="Gene3D" id="3.40.50.300">
    <property type="entry name" value="P-loop containing nucleotide triphosphate hydrolases"/>
    <property type="match status" value="1"/>
</dbReference>
<dbReference type="InterPro" id="IPR003593">
    <property type="entry name" value="AAA+_ATPase"/>
</dbReference>
<dbReference type="InterPro" id="IPR003959">
    <property type="entry name" value="ATPase_AAA_core"/>
</dbReference>
<dbReference type="InterPro" id="IPR003960">
    <property type="entry name" value="ATPase_AAA_CS"/>
</dbReference>
<dbReference type="InterPro" id="IPR014851">
    <property type="entry name" value="BCS1_N"/>
</dbReference>
<dbReference type="InterPro" id="IPR050747">
    <property type="entry name" value="Mitochondrial_chaperone_BCS1"/>
</dbReference>
<dbReference type="InterPro" id="IPR027417">
    <property type="entry name" value="P-loop_NTPase"/>
</dbReference>
<dbReference type="PANTHER" id="PTHR23070">
    <property type="entry name" value="BCS1 AAA-TYPE ATPASE"/>
    <property type="match status" value="1"/>
</dbReference>
<dbReference type="Pfam" id="PF00004">
    <property type="entry name" value="AAA"/>
    <property type="match status" value="1"/>
</dbReference>
<dbReference type="Pfam" id="PF25426">
    <property type="entry name" value="AAA_lid_BCS1"/>
    <property type="match status" value="1"/>
</dbReference>
<dbReference type="Pfam" id="PF08740">
    <property type="entry name" value="BCS1_N"/>
    <property type="match status" value="1"/>
</dbReference>
<dbReference type="SMART" id="SM00382">
    <property type="entry name" value="AAA"/>
    <property type="match status" value="1"/>
</dbReference>
<dbReference type="SMART" id="SM01024">
    <property type="entry name" value="BCS1_N"/>
    <property type="match status" value="1"/>
</dbReference>
<dbReference type="SUPFAM" id="SSF52540">
    <property type="entry name" value="P-loop containing nucleoside triphosphate hydrolases"/>
    <property type="match status" value="1"/>
</dbReference>
<dbReference type="PROSITE" id="PS00674">
    <property type="entry name" value="AAA"/>
    <property type="match status" value="1"/>
</dbReference>
<accession>Q9P6Q3</accession>
<accession>P78787</accession>
<sequence>MDNIGAADAATSSGISGLLSGNSFLGAGIGLMGFGAGLAILRRGLISGASLVKRRMLVSVEIPSKEKSYNAFLHWMSTVPKRYSNQLAVESNRQLKMPQNAREKPDKQVANRIFSLVPGPGKHYIKYKKCWIQVERERSNRLQDLTTGTPWETITLTTLSRDRGIFSELLLEAQKFMQSAQKNKTTIYTAWATEWKPFGHPRSKRMLSSVVLESNVKKMITDDVHDFLRNSQWYDTRGIPYRRGYLLYGPPGSGKTSFLYALAGELDYDICVLNLAEKGLTDDRLNHLLSNVPPKAVVLLEDVDSAFQGRERSGEVGFHANVTFSGLLNALDGVTSSDERIIFMTTNHPEKLDPALVRPGRVDVKAYLGNATPEQVREMFTRFYGHSPEMADDLSDIVCPKNTSMASLQGLFVMNKSSPADAVDMAKELPDNPPSTPFSFNVHRKSLSV</sequence>
<feature type="chain" id="PRO_0000084776" description="Probable mitochondrial chaperone bcs1">
    <location>
        <begin position="1"/>
        <end position="449"/>
    </location>
</feature>
<feature type="topological domain" description="Mitochondrial intermembrane" evidence="2">
    <location>
        <begin position="1"/>
        <end position="20"/>
    </location>
</feature>
<feature type="transmembrane region" description="Helical" evidence="2">
    <location>
        <begin position="21"/>
        <end position="41"/>
    </location>
</feature>
<feature type="topological domain" description="Mitochondrial matrix" evidence="2">
    <location>
        <begin position="42"/>
        <end position="449"/>
    </location>
</feature>
<feature type="binding site" evidence="2">
    <location>
        <begin position="249"/>
        <end position="256"/>
    </location>
    <ligand>
        <name>ATP</name>
        <dbReference type="ChEBI" id="CHEBI:30616"/>
    </ligand>
</feature>
<feature type="sequence conflict" description="In Ref. 2; BAA13798." evidence="3" ref="2">
    <original>I</original>
    <variation>F</variation>
    <location>
        <position position="113"/>
    </location>
</feature>
<feature type="sequence conflict" description="In Ref. 2; BAA13798." evidence="3" ref="2">
    <original>F</original>
    <variation>L</variation>
    <location>
        <position position="412"/>
    </location>
</feature>
<name>BCS1_SCHPO</name>
<evidence type="ECO:0000250" key="1">
    <source>
        <dbReference type="UniProtKB" id="P32839"/>
    </source>
</evidence>
<evidence type="ECO:0000255" key="2"/>
<evidence type="ECO:0000305" key="3"/>
<reference key="1">
    <citation type="journal article" date="2002" name="Nature">
        <title>The genome sequence of Schizosaccharomyces pombe.</title>
        <authorList>
            <person name="Wood V."/>
            <person name="Gwilliam R."/>
            <person name="Rajandream M.A."/>
            <person name="Lyne M.H."/>
            <person name="Lyne R."/>
            <person name="Stewart A."/>
            <person name="Sgouros J.G."/>
            <person name="Peat N."/>
            <person name="Hayles J."/>
            <person name="Baker S.G."/>
            <person name="Basham D."/>
            <person name="Bowman S."/>
            <person name="Brooks K."/>
            <person name="Brown D."/>
            <person name="Brown S."/>
            <person name="Chillingworth T."/>
            <person name="Churcher C.M."/>
            <person name="Collins M."/>
            <person name="Connor R."/>
            <person name="Cronin A."/>
            <person name="Davis P."/>
            <person name="Feltwell T."/>
            <person name="Fraser A."/>
            <person name="Gentles S."/>
            <person name="Goble A."/>
            <person name="Hamlin N."/>
            <person name="Harris D.E."/>
            <person name="Hidalgo J."/>
            <person name="Hodgson G."/>
            <person name="Holroyd S."/>
            <person name="Hornsby T."/>
            <person name="Howarth S."/>
            <person name="Huckle E.J."/>
            <person name="Hunt S."/>
            <person name="Jagels K."/>
            <person name="James K.D."/>
            <person name="Jones L."/>
            <person name="Jones M."/>
            <person name="Leather S."/>
            <person name="McDonald S."/>
            <person name="McLean J."/>
            <person name="Mooney P."/>
            <person name="Moule S."/>
            <person name="Mungall K.L."/>
            <person name="Murphy L.D."/>
            <person name="Niblett D."/>
            <person name="Odell C."/>
            <person name="Oliver K."/>
            <person name="O'Neil S."/>
            <person name="Pearson D."/>
            <person name="Quail M.A."/>
            <person name="Rabbinowitsch E."/>
            <person name="Rutherford K.M."/>
            <person name="Rutter S."/>
            <person name="Saunders D."/>
            <person name="Seeger K."/>
            <person name="Sharp S."/>
            <person name="Skelton J."/>
            <person name="Simmonds M.N."/>
            <person name="Squares R."/>
            <person name="Squares S."/>
            <person name="Stevens K."/>
            <person name="Taylor K."/>
            <person name="Taylor R.G."/>
            <person name="Tivey A."/>
            <person name="Walsh S.V."/>
            <person name="Warren T."/>
            <person name="Whitehead S."/>
            <person name="Woodward J.R."/>
            <person name="Volckaert G."/>
            <person name="Aert R."/>
            <person name="Robben J."/>
            <person name="Grymonprez B."/>
            <person name="Weltjens I."/>
            <person name="Vanstreels E."/>
            <person name="Rieger M."/>
            <person name="Schaefer M."/>
            <person name="Mueller-Auer S."/>
            <person name="Gabel C."/>
            <person name="Fuchs M."/>
            <person name="Duesterhoeft A."/>
            <person name="Fritzc C."/>
            <person name="Holzer E."/>
            <person name="Moestl D."/>
            <person name="Hilbert H."/>
            <person name="Borzym K."/>
            <person name="Langer I."/>
            <person name="Beck A."/>
            <person name="Lehrach H."/>
            <person name="Reinhardt R."/>
            <person name="Pohl T.M."/>
            <person name="Eger P."/>
            <person name="Zimmermann W."/>
            <person name="Wedler H."/>
            <person name="Wambutt R."/>
            <person name="Purnelle B."/>
            <person name="Goffeau A."/>
            <person name="Cadieu E."/>
            <person name="Dreano S."/>
            <person name="Gloux S."/>
            <person name="Lelaure V."/>
            <person name="Mottier S."/>
            <person name="Galibert F."/>
            <person name="Aves S.J."/>
            <person name="Xiang Z."/>
            <person name="Hunt C."/>
            <person name="Moore K."/>
            <person name="Hurst S.M."/>
            <person name="Lucas M."/>
            <person name="Rochet M."/>
            <person name="Gaillardin C."/>
            <person name="Tallada V.A."/>
            <person name="Garzon A."/>
            <person name="Thode G."/>
            <person name="Daga R.R."/>
            <person name="Cruzado L."/>
            <person name="Jimenez J."/>
            <person name="Sanchez M."/>
            <person name="del Rey F."/>
            <person name="Benito J."/>
            <person name="Dominguez A."/>
            <person name="Revuelta J.L."/>
            <person name="Moreno S."/>
            <person name="Armstrong J."/>
            <person name="Forsburg S.L."/>
            <person name="Cerutti L."/>
            <person name="Lowe T."/>
            <person name="McCombie W.R."/>
            <person name="Paulsen I."/>
            <person name="Potashkin J."/>
            <person name="Shpakovski G.V."/>
            <person name="Ussery D."/>
            <person name="Barrell B.G."/>
            <person name="Nurse P."/>
        </authorList>
    </citation>
    <scope>NUCLEOTIDE SEQUENCE [LARGE SCALE GENOMIC DNA]</scope>
    <source>
        <strain>972 / ATCC 24843</strain>
    </source>
</reference>
<reference key="2">
    <citation type="journal article" date="1997" name="DNA Res.">
        <title>Identification of open reading frames in Schizosaccharomyces pombe cDNAs.</title>
        <authorList>
            <person name="Yoshioka S."/>
            <person name="Kato K."/>
            <person name="Nakai K."/>
            <person name="Okayama H."/>
            <person name="Nojima H."/>
        </authorList>
    </citation>
    <scope>NUCLEOTIDE SEQUENCE [LARGE SCALE MRNA] OF 31-449</scope>
    <source>
        <strain>PR745</strain>
    </source>
</reference>
<proteinExistence type="evidence at transcript level"/>
<gene>
    <name type="ORF">SPAC644.07</name>
</gene>
<protein>
    <recommendedName>
        <fullName>Probable mitochondrial chaperone bcs1</fullName>
        <ecNumber evidence="1">3.6.1.-</ecNumber>
    </recommendedName>
    <alternativeName>
        <fullName>BCS1-like protein</fullName>
    </alternativeName>
</protein>
<comment type="function">
    <text evidence="1">Chaperone necessary for the incorporation of Rieske iron-sulfur protein rip1 into the mitochondrial respiratory chain complex III.</text>
</comment>
<comment type="catalytic activity">
    <reaction evidence="1">
        <text>ATP + H2O = ADP + phosphate + H(+)</text>
        <dbReference type="Rhea" id="RHEA:13065"/>
        <dbReference type="ChEBI" id="CHEBI:15377"/>
        <dbReference type="ChEBI" id="CHEBI:15378"/>
        <dbReference type="ChEBI" id="CHEBI:30616"/>
        <dbReference type="ChEBI" id="CHEBI:43474"/>
        <dbReference type="ChEBI" id="CHEBI:456216"/>
    </reaction>
    <physiologicalReaction direction="left-to-right" evidence="1">
        <dbReference type="Rhea" id="RHEA:13066"/>
    </physiologicalReaction>
</comment>
<comment type="subcellular location">
    <subcellularLocation>
        <location evidence="1">Mitochondrion inner membrane</location>
        <topology evidence="1">Single-pass membrane protein</topology>
    </subcellularLocation>
</comment>
<comment type="similarity">
    <text evidence="3">Belongs to the AAA ATPase family. BCS1 subfamily.</text>
</comment>